<comment type="function">
    <text evidence="1">Catalyzes the pyrimidine ring opening between N-3 and C-4 by an unusual flavin hydroperoxide-catalyzed mechanism, adding oxygen atoms in the process to yield ureidoacrylate peracid, that immediately reacts with FMN forming ureidoacrylate and FMN-N(5)-oxide. The FMN-N(5)-oxide reacts spontaneously with NADH to produce FMN. Requires the flavin reductase RutF to regenerate FMN in vivo.</text>
</comment>
<comment type="catalytic activity">
    <reaction evidence="1">
        <text>uracil + FMNH2 + NADH + O2 = (Z)-3-ureidoacrylate + FMN + NAD(+) + H2O + H(+)</text>
        <dbReference type="Rhea" id="RHEA:31587"/>
        <dbReference type="ChEBI" id="CHEBI:15377"/>
        <dbReference type="ChEBI" id="CHEBI:15378"/>
        <dbReference type="ChEBI" id="CHEBI:15379"/>
        <dbReference type="ChEBI" id="CHEBI:17568"/>
        <dbReference type="ChEBI" id="CHEBI:57540"/>
        <dbReference type="ChEBI" id="CHEBI:57618"/>
        <dbReference type="ChEBI" id="CHEBI:57945"/>
        <dbReference type="ChEBI" id="CHEBI:58210"/>
        <dbReference type="ChEBI" id="CHEBI:59891"/>
        <dbReference type="EC" id="1.14.99.46"/>
    </reaction>
</comment>
<comment type="catalytic activity">
    <reaction evidence="1">
        <text>thymine + FMNH2 + NADH + O2 = (Z)-2-methylureidoacrylate + FMN + NAD(+) + H2O + H(+)</text>
        <dbReference type="Rhea" id="RHEA:31599"/>
        <dbReference type="ChEBI" id="CHEBI:15377"/>
        <dbReference type="ChEBI" id="CHEBI:15378"/>
        <dbReference type="ChEBI" id="CHEBI:15379"/>
        <dbReference type="ChEBI" id="CHEBI:17821"/>
        <dbReference type="ChEBI" id="CHEBI:57540"/>
        <dbReference type="ChEBI" id="CHEBI:57618"/>
        <dbReference type="ChEBI" id="CHEBI:57945"/>
        <dbReference type="ChEBI" id="CHEBI:58210"/>
        <dbReference type="ChEBI" id="CHEBI:143783"/>
        <dbReference type="EC" id="1.14.99.46"/>
    </reaction>
</comment>
<comment type="similarity">
    <text evidence="1">Belongs to the NtaA/SnaA/DszA monooxygenase family. RutA subfamily.</text>
</comment>
<name>RUTA_KLEP3</name>
<protein>
    <recommendedName>
        <fullName evidence="1">Pyrimidine monooxygenase RutA</fullName>
        <ecNumber evidence="1">1.14.99.46</ecNumber>
    </recommendedName>
</protein>
<dbReference type="EC" id="1.14.99.46" evidence="1"/>
<dbReference type="EMBL" id="CP000964">
    <property type="protein sequence ID" value="ACI07248.1"/>
    <property type="molecule type" value="Genomic_DNA"/>
</dbReference>
<dbReference type="SMR" id="B5XXN0"/>
<dbReference type="KEGG" id="kpe:KPK_3520"/>
<dbReference type="HOGENOM" id="CLU_027853_1_1_6"/>
<dbReference type="Proteomes" id="UP000001734">
    <property type="component" value="Chromosome"/>
</dbReference>
<dbReference type="GO" id="GO:0008726">
    <property type="term" value="F:alkanesulfonate monooxygenase activity"/>
    <property type="evidence" value="ECO:0007669"/>
    <property type="project" value="TreeGrafter"/>
</dbReference>
<dbReference type="GO" id="GO:0052614">
    <property type="term" value="F:uracil oxygenase activity"/>
    <property type="evidence" value="ECO:0007669"/>
    <property type="project" value="UniProtKB-EC"/>
</dbReference>
<dbReference type="GO" id="GO:0046306">
    <property type="term" value="P:alkanesulfonate catabolic process"/>
    <property type="evidence" value="ECO:0007669"/>
    <property type="project" value="TreeGrafter"/>
</dbReference>
<dbReference type="GO" id="GO:0019740">
    <property type="term" value="P:nitrogen utilization"/>
    <property type="evidence" value="ECO:0007669"/>
    <property type="project" value="UniProtKB-UniRule"/>
</dbReference>
<dbReference type="GO" id="GO:0006212">
    <property type="term" value="P:uracil catabolic process"/>
    <property type="evidence" value="ECO:0007669"/>
    <property type="project" value="UniProtKB-UniRule"/>
</dbReference>
<dbReference type="CDD" id="cd01094">
    <property type="entry name" value="Alkanesulfonate_monoxygenase"/>
    <property type="match status" value="1"/>
</dbReference>
<dbReference type="FunFam" id="3.20.20.30:FF:000003">
    <property type="entry name" value="Pyrimidine monooxygenase RutA"/>
    <property type="match status" value="1"/>
</dbReference>
<dbReference type="Gene3D" id="3.20.20.30">
    <property type="entry name" value="Luciferase-like domain"/>
    <property type="match status" value="1"/>
</dbReference>
<dbReference type="HAMAP" id="MF_01699">
    <property type="entry name" value="RutA"/>
    <property type="match status" value="1"/>
</dbReference>
<dbReference type="InterPro" id="IPR011251">
    <property type="entry name" value="Luciferase-like_dom"/>
</dbReference>
<dbReference type="InterPro" id="IPR036661">
    <property type="entry name" value="Luciferase-like_sf"/>
</dbReference>
<dbReference type="InterPro" id="IPR019914">
    <property type="entry name" value="Pyrimidine_monooxygenase_RutA"/>
</dbReference>
<dbReference type="InterPro" id="IPR050172">
    <property type="entry name" value="SsuD_RutA_monooxygenase"/>
</dbReference>
<dbReference type="NCBIfam" id="TIGR03612">
    <property type="entry name" value="RutA"/>
    <property type="match status" value="1"/>
</dbReference>
<dbReference type="PANTHER" id="PTHR42847">
    <property type="entry name" value="ALKANESULFONATE MONOOXYGENASE"/>
    <property type="match status" value="1"/>
</dbReference>
<dbReference type="PANTHER" id="PTHR42847:SF4">
    <property type="entry name" value="ALKANESULFONATE MONOOXYGENASE-RELATED"/>
    <property type="match status" value="1"/>
</dbReference>
<dbReference type="Pfam" id="PF00296">
    <property type="entry name" value="Bac_luciferase"/>
    <property type="match status" value="1"/>
</dbReference>
<dbReference type="SUPFAM" id="SSF51679">
    <property type="entry name" value="Bacterial luciferase-like"/>
    <property type="match status" value="1"/>
</dbReference>
<keyword id="KW-0285">Flavoprotein</keyword>
<keyword id="KW-0288">FMN</keyword>
<keyword id="KW-0503">Monooxygenase</keyword>
<keyword id="KW-0521">NADP</keyword>
<keyword id="KW-0560">Oxidoreductase</keyword>
<proteinExistence type="inferred from homology"/>
<accession>B5XXN0</accession>
<reference key="1">
    <citation type="journal article" date="2008" name="PLoS Genet.">
        <title>Complete genome sequence of the N2-fixing broad host range endophyte Klebsiella pneumoniae 342 and virulence predictions verified in mice.</title>
        <authorList>
            <person name="Fouts D.E."/>
            <person name="Tyler H.L."/>
            <person name="DeBoy R.T."/>
            <person name="Daugherty S."/>
            <person name="Ren Q."/>
            <person name="Badger J.H."/>
            <person name="Durkin A.S."/>
            <person name="Huot H."/>
            <person name="Shrivastava S."/>
            <person name="Kothari S."/>
            <person name="Dodson R.J."/>
            <person name="Mohamoud Y."/>
            <person name="Khouri H."/>
            <person name="Roesch L.F.W."/>
            <person name="Krogfelt K.A."/>
            <person name="Struve C."/>
            <person name="Triplett E.W."/>
            <person name="Methe B.A."/>
        </authorList>
    </citation>
    <scope>NUCLEOTIDE SEQUENCE [LARGE SCALE GENOMIC DNA]</scope>
    <source>
        <strain>342</strain>
    </source>
</reference>
<feature type="chain" id="PRO_0000402625" description="Pyrimidine monooxygenase RutA">
    <location>
        <begin position="1"/>
        <end position="363"/>
    </location>
</feature>
<feature type="binding site" evidence="1">
    <location>
        <begin position="49"/>
        <end position="50"/>
    </location>
    <ligand>
        <name>FMN</name>
        <dbReference type="ChEBI" id="CHEBI:58210"/>
    </ligand>
</feature>
<feature type="binding site" evidence="1">
    <location>
        <position position="115"/>
    </location>
    <ligand>
        <name>FMN</name>
        <dbReference type="ChEBI" id="CHEBI:58210"/>
    </ligand>
</feature>
<feature type="binding site" evidence="1">
    <location>
        <position position="124"/>
    </location>
    <ligand>
        <name>FMN</name>
        <dbReference type="ChEBI" id="CHEBI:58210"/>
    </ligand>
</feature>
<feature type="binding site" evidence="1">
    <location>
        <begin position="140"/>
        <end position="141"/>
    </location>
    <ligand>
        <name>FMN</name>
        <dbReference type="ChEBI" id="CHEBI:58210"/>
    </ligand>
</feature>
<feature type="binding site" evidence="1">
    <location>
        <position position="190"/>
    </location>
    <ligand>
        <name>FMN</name>
        <dbReference type="ChEBI" id="CHEBI:58210"/>
    </ligand>
</feature>
<evidence type="ECO:0000255" key="1">
    <source>
        <dbReference type="HAMAP-Rule" id="MF_01699"/>
    </source>
</evidence>
<sequence>MKIGVFVPIGNNGWLISTHAPQYMPTFELNKAIVQKAEHYHFDFALSMIKLRGFGGKTEFWDHNLESFTLMAGLAAVTSKIQIYATAATLTLPPAIVARMASTIDSISGGRFGVNLVTGWQKPEYDQMGMWPGDDYFASRYDYLTEYVQVLRDLWGTGRSDFKGDYFTMNDCRVSPRPSQPMKVICAGQSDAGMAFSAQHADYNFCFGKGVNTPTAFAPTAARMIQAAEKTGRDVGSYVLFMVIADETDEAARAKWEHYKAGADEEALAWLTEQSQKDTRSGSDTNVRQMADPTSAVNINMGTLVGSYASIARMLDEVASVPGTDGVLLTFDDFLAGIDAFGERIQPLMRCRDHIAPVTREVA</sequence>
<gene>
    <name evidence="1" type="primary">rutA</name>
    <name type="ordered locus">KPK_3520</name>
</gene>
<organism>
    <name type="scientific">Klebsiella pneumoniae (strain 342)</name>
    <dbReference type="NCBI Taxonomy" id="507522"/>
    <lineage>
        <taxon>Bacteria</taxon>
        <taxon>Pseudomonadati</taxon>
        <taxon>Pseudomonadota</taxon>
        <taxon>Gammaproteobacteria</taxon>
        <taxon>Enterobacterales</taxon>
        <taxon>Enterobacteriaceae</taxon>
        <taxon>Klebsiella/Raoultella group</taxon>
        <taxon>Klebsiella</taxon>
        <taxon>Klebsiella pneumoniae complex</taxon>
    </lineage>
</organism>